<gene>
    <name evidence="1" type="primary">rplI</name>
    <name type="ordered locus">CLJ_B3961</name>
</gene>
<organism>
    <name type="scientific">Clostridium botulinum (strain 657 / Type Ba4)</name>
    <dbReference type="NCBI Taxonomy" id="515621"/>
    <lineage>
        <taxon>Bacteria</taxon>
        <taxon>Bacillati</taxon>
        <taxon>Bacillota</taxon>
        <taxon>Clostridia</taxon>
        <taxon>Eubacteriales</taxon>
        <taxon>Clostridiaceae</taxon>
        <taxon>Clostridium</taxon>
    </lineage>
</organism>
<evidence type="ECO:0000255" key="1">
    <source>
        <dbReference type="HAMAP-Rule" id="MF_00503"/>
    </source>
</evidence>
<evidence type="ECO:0000305" key="2"/>
<proteinExistence type="inferred from homology"/>
<name>RL9_CLOB6</name>
<keyword id="KW-0687">Ribonucleoprotein</keyword>
<keyword id="KW-0689">Ribosomal protein</keyword>
<keyword id="KW-0694">RNA-binding</keyword>
<keyword id="KW-0699">rRNA-binding</keyword>
<dbReference type="EMBL" id="CP001083">
    <property type="protein sequence ID" value="ACQ53309.1"/>
    <property type="molecule type" value="Genomic_DNA"/>
</dbReference>
<dbReference type="RefSeq" id="WP_003359455.1">
    <property type="nucleotide sequence ID" value="NC_012658.1"/>
</dbReference>
<dbReference type="SMR" id="C3KWH4"/>
<dbReference type="GeneID" id="92940422"/>
<dbReference type="KEGG" id="cbi:CLJ_B3961"/>
<dbReference type="HOGENOM" id="CLU_078938_3_0_9"/>
<dbReference type="Proteomes" id="UP000002333">
    <property type="component" value="Chromosome"/>
</dbReference>
<dbReference type="GO" id="GO:1990904">
    <property type="term" value="C:ribonucleoprotein complex"/>
    <property type="evidence" value="ECO:0007669"/>
    <property type="project" value="UniProtKB-KW"/>
</dbReference>
<dbReference type="GO" id="GO:0005840">
    <property type="term" value="C:ribosome"/>
    <property type="evidence" value="ECO:0007669"/>
    <property type="project" value="UniProtKB-KW"/>
</dbReference>
<dbReference type="GO" id="GO:0019843">
    <property type="term" value="F:rRNA binding"/>
    <property type="evidence" value="ECO:0007669"/>
    <property type="project" value="UniProtKB-UniRule"/>
</dbReference>
<dbReference type="GO" id="GO:0003735">
    <property type="term" value="F:structural constituent of ribosome"/>
    <property type="evidence" value="ECO:0007669"/>
    <property type="project" value="InterPro"/>
</dbReference>
<dbReference type="GO" id="GO:0006412">
    <property type="term" value="P:translation"/>
    <property type="evidence" value="ECO:0007669"/>
    <property type="project" value="UniProtKB-UniRule"/>
</dbReference>
<dbReference type="FunFam" id="3.40.5.10:FF:000002">
    <property type="entry name" value="50S ribosomal protein L9"/>
    <property type="match status" value="1"/>
</dbReference>
<dbReference type="Gene3D" id="3.10.430.100">
    <property type="entry name" value="Ribosomal protein L9, C-terminal domain"/>
    <property type="match status" value="1"/>
</dbReference>
<dbReference type="Gene3D" id="3.40.5.10">
    <property type="entry name" value="Ribosomal protein L9, N-terminal domain"/>
    <property type="match status" value="1"/>
</dbReference>
<dbReference type="HAMAP" id="MF_00503">
    <property type="entry name" value="Ribosomal_bL9"/>
    <property type="match status" value="1"/>
</dbReference>
<dbReference type="InterPro" id="IPR000244">
    <property type="entry name" value="Ribosomal_bL9"/>
</dbReference>
<dbReference type="InterPro" id="IPR009027">
    <property type="entry name" value="Ribosomal_bL9/RNase_H1_N"/>
</dbReference>
<dbReference type="InterPro" id="IPR020594">
    <property type="entry name" value="Ribosomal_bL9_bac/chp"/>
</dbReference>
<dbReference type="InterPro" id="IPR020069">
    <property type="entry name" value="Ribosomal_bL9_C"/>
</dbReference>
<dbReference type="InterPro" id="IPR036791">
    <property type="entry name" value="Ribosomal_bL9_C_sf"/>
</dbReference>
<dbReference type="InterPro" id="IPR020070">
    <property type="entry name" value="Ribosomal_bL9_N"/>
</dbReference>
<dbReference type="InterPro" id="IPR036935">
    <property type="entry name" value="Ribosomal_bL9_N_sf"/>
</dbReference>
<dbReference type="NCBIfam" id="TIGR00158">
    <property type="entry name" value="L9"/>
    <property type="match status" value="1"/>
</dbReference>
<dbReference type="PANTHER" id="PTHR21368">
    <property type="entry name" value="50S RIBOSOMAL PROTEIN L9"/>
    <property type="match status" value="1"/>
</dbReference>
<dbReference type="Pfam" id="PF03948">
    <property type="entry name" value="Ribosomal_L9_C"/>
    <property type="match status" value="1"/>
</dbReference>
<dbReference type="Pfam" id="PF01281">
    <property type="entry name" value="Ribosomal_L9_N"/>
    <property type="match status" value="1"/>
</dbReference>
<dbReference type="SUPFAM" id="SSF55658">
    <property type="entry name" value="L9 N-domain-like"/>
    <property type="match status" value="1"/>
</dbReference>
<dbReference type="SUPFAM" id="SSF55653">
    <property type="entry name" value="Ribosomal protein L9 C-domain"/>
    <property type="match status" value="1"/>
</dbReference>
<dbReference type="PROSITE" id="PS00651">
    <property type="entry name" value="RIBOSOMAL_L9"/>
    <property type="match status" value="1"/>
</dbReference>
<feature type="chain" id="PRO_1000206539" description="Large ribosomal subunit protein bL9">
    <location>
        <begin position="1"/>
        <end position="147"/>
    </location>
</feature>
<sequence>MKVILLKDVKSLGKKGDLVNASDGYARNYLIPKKLAEQATENNVHILNNKKEAERRQKLKELEEAQKLAKSLMGKEIKFKVKIGENGRLFGSITSKDISEKLKEQYNMDIDKKKIVAETIRQTGVYEAEIKIYPEVSTKVKVSVLEE</sequence>
<comment type="function">
    <text evidence="1">Binds to the 23S rRNA.</text>
</comment>
<comment type="similarity">
    <text evidence="1">Belongs to the bacterial ribosomal protein bL9 family.</text>
</comment>
<reference key="1">
    <citation type="submission" date="2008-05" db="EMBL/GenBank/DDBJ databases">
        <title>Genome sequence of Clostridium botulinum Ba4 strain 657.</title>
        <authorList>
            <person name="Shrivastava S."/>
            <person name="Brown J.L."/>
            <person name="Bruce D."/>
            <person name="Detter C."/>
            <person name="Munk C."/>
            <person name="Smith L.A."/>
            <person name="Smith T.J."/>
            <person name="Sutton G."/>
            <person name="Brettin T.S."/>
        </authorList>
    </citation>
    <scope>NUCLEOTIDE SEQUENCE [LARGE SCALE GENOMIC DNA]</scope>
    <source>
        <strain>657 / Type Ba4</strain>
    </source>
</reference>
<accession>C3KWH4</accession>
<protein>
    <recommendedName>
        <fullName evidence="1">Large ribosomal subunit protein bL9</fullName>
    </recommendedName>
    <alternativeName>
        <fullName evidence="2">50S ribosomal protein L9</fullName>
    </alternativeName>
</protein>